<protein>
    <recommendedName>
        <fullName>Interferon</fullName>
        <shortName>TkIFN</shortName>
    </recommendedName>
</protein>
<feature type="signal peptide" evidence="2">
    <location>
        <begin position="1"/>
        <end position="30"/>
    </location>
</feature>
<feature type="chain" id="PRO_0000016431" description="Interferon">
    <location>
        <begin position="31"/>
        <end position="192"/>
    </location>
</feature>
<feature type="glycosylation site" description="N-linked (GlcNAc...) asparagine" evidence="2">
    <location>
        <position position="70"/>
    </location>
</feature>
<feature type="glycosylation site" description="N-linked (GlcNAc...) asparagine" evidence="2">
    <location>
        <position position="77"/>
    </location>
</feature>
<feature type="disulfide bond" evidence="1">
    <location>
        <begin position="31"/>
        <end position="128"/>
    </location>
</feature>
<feature type="disulfide bond" evidence="2">
    <location>
        <begin position="60"/>
        <end position="154"/>
    </location>
</feature>
<feature type="disulfide bond" evidence="1">
    <location>
        <begin position="67"/>
        <end position="167"/>
    </location>
</feature>
<accession>P51527</accession>
<organism>
    <name type="scientific">Meleagris gallopavo</name>
    <name type="common">Wild turkey</name>
    <dbReference type="NCBI Taxonomy" id="9103"/>
    <lineage>
        <taxon>Eukaryota</taxon>
        <taxon>Metazoa</taxon>
        <taxon>Chordata</taxon>
        <taxon>Craniata</taxon>
        <taxon>Vertebrata</taxon>
        <taxon>Euteleostomi</taxon>
        <taxon>Archelosauria</taxon>
        <taxon>Archosauria</taxon>
        <taxon>Dinosauria</taxon>
        <taxon>Saurischia</taxon>
        <taxon>Theropoda</taxon>
        <taxon>Coelurosauria</taxon>
        <taxon>Aves</taxon>
        <taxon>Neognathae</taxon>
        <taxon>Galloanserae</taxon>
        <taxon>Galliformes</taxon>
        <taxon>Phasianidae</taxon>
        <taxon>Meleagridinae</taxon>
        <taxon>Meleagris</taxon>
    </lineage>
</organism>
<name>IFNA_MELGA</name>
<sequence length="192" mass="21884">MAVPASPQHPRGYGILLLTLLMKALAAAAACNHLRPQDATFSRDSLQLLRDMAPSPPQPCPQHNAPCSFNDTVLDTNNTQQADKTTHNILQHLFKILSGPTTPAHWIDSQRQSLLNQIQRYAQHLEQCLADSHTRSRTRWPHNPHLTINKHFSCLHAFLHDNDYSACAWDHVRLRARAWLLHIHDLVRNTRT</sequence>
<evidence type="ECO:0000250" key="1"/>
<evidence type="ECO:0000255" key="2"/>
<evidence type="ECO:0000269" key="3">
    <source>
    </source>
</evidence>
<evidence type="ECO:0000305" key="4"/>
<reference key="1">
    <citation type="journal article" date="1995" name="J. Virol.">
        <title>Molecular and functional characterization of turkey interferon.</title>
        <authorList>
            <person name="Suresh M."/>
            <person name="Karaca K."/>
            <person name="Foster D."/>
            <person name="Sharma J.M."/>
        </authorList>
    </citation>
    <scope>NUCLEOTIDE SEQUENCE [GENOMIC DNA]</scope>
    <scope>FUNCTION</scope>
    <source>
        <strain>Nicholas</strain>
    </source>
</reference>
<keyword id="KW-0051">Antiviral defense</keyword>
<keyword id="KW-0202">Cytokine</keyword>
<keyword id="KW-1015">Disulfide bond</keyword>
<keyword id="KW-0325">Glycoprotein</keyword>
<keyword id="KW-1185">Reference proteome</keyword>
<keyword id="KW-0964">Secreted</keyword>
<keyword id="KW-0732">Signal</keyword>
<comment type="function">
    <text evidence="3">Has antiviral activities.</text>
</comment>
<comment type="subcellular location">
    <subcellularLocation>
        <location>Secreted</location>
    </subcellularLocation>
</comment>
<comment type="similarity">
    <text evidence="4">Belongs to the alpha/beta interferon family.</text>
</comment>
<proteinExistence type="inferred from homology"/>
<dbReference type="EMBL" id="U28140">
    <property type="protein sequence ID" value="AAB40029.1"/>
    <property type="molecule type" value="Genomic_DNA"/>
</dbReference>
<dbReference type="SMR" id="P51527"/>
<dbReference type="FunCoup" id="P51527">
    <property type="interactions" value="41"/>
</dbReference>
<dbReference type="InParanoid" id="P51527"/>
<dbReference type="Proteomes" id="UP000001645">
    <property type="component" value="Unplaced"/>
</dbReference>
<dbReference type="GO" id="GO:0005615">
    <property type="term" value="C:extracellular space"/>
    <property type="evidence" value="ECO:0007669"/>
    <property type="project" value="UniProtKB-KW"/>
</dbReference>
<dbReference type="GO" id="GO:0005125">
    <property type="term" value="F:cytokine activity"/>
    <property type="evidence" value="ECO:0007669"/>
    <property type="project" value="UniProtKB-KW"/>
</dbReference>
<dbReference type="GO" id="GO:0005126">
    <property type="term" value="F:cytokine receptor binding"/>
    <property type="evidence" value="ECO:0007669"/>
    <property type="project" value="InterPro"/>
</dbReference>
<dbReference type="GO" id="GO:0051607">
    <property type="term" value="P:defense response to virus"/>
    <property type="evidence" value="ECO:0007669"/>
    <property type="project" value="UniProtKB-KW"/>
</dbReference>
<dbReference type="GO" id="GO:0006955">
    <property type="term" value="P:immune response"/>
    <property type="evidence" value="ECO:0007669"/>
    <property type="project" value="UniProtKB-ARBA"/>
</dbReference>
<dbReference type="CDD" id="cd00095">
    <property type="entry name" value="IFab"/>
    <property type="match status" value="1"/>
</dbReference>
<dbReference type="FunFam" id="1.20.1250.10:FF:000046">
    <property type="entry name" value="Interferon alpha"/>
    <property type="match status" value="1"/>
</dbReference>
<dbReference type="Gene3D" id="1.20.1250.10">
    <property type="match status" value="1"/>
</dbReference>
<dbReference type="InterPro" id="IPR009079">
    <property type="entry name" value="4_helix_cytokine-like_core"/>
</dbReference>
<dbReference type="InterPro" id="IPR000471">
    <property type="entry name" value="Interferon_alpha/beta/delta"/>
</dbReference>
<dbReference type="PANTHER" id="PTHR11691:SF73">
    <property type="entry name" value="INTERFERON BETA"/>
    <property type="match status" value="1"/>
</dbReference>
<dbReference type="PANTHER" id="PTHR11691">
    <property type="entry name" value="TYPE I INTERFERON"/>
    <property type="match status" value="1"/>
</dbReference>
<dbReference type="Pfam" id="PF00143">
    <property type="entry name" value="Interferon"/>
    <property type="match status" value="1"/>
</dbReference>
<dbReference type="SMART" id="SM00076">
    <property type="entry name" value="IFabd"/>
    <property type="match status" value="1"/>
</dbReference>
<dbReference type="SUPFAM" id="SSF47266">
    <property type="entry name" value="4-helical cytokines"/>
    <property type="match status" value="1"/>
</dbReference>
<dbReference type="PROSITE" id="PS00252">
    <property type="entry name" value="INTERFERON_A_B_D"/>
    <property type="match status" value="1"/>
</dbReference>